<organism>
    <name type="scientific">Edwardsiella ictaluri (strain 93-146)</name>
    <dbReference type="NCBI Taxonomy" id="634503"/>
    <lineage>
        <taxon>Bacteria</taxon>
        <taxon>Pseudomonadati</taxon>
        <taxon>Pseudomonadota</taxon>
        <taxon>Gammaproteobacteria</taxon>
        <taxon>Enterobacterales</taxon>
        <taxon>Hafniaceae</taxon>
        <taxon>Edwardsiella</taxon>
    </lineage>
</organism>
<keyword id="KW-0119">Carbohydrate metabolism</keyword>
<keyword id="KW-0963">Cytoplasm</keyword>
<keyword id="KW-0413">Isomerase</keyword>
<protein>
    <recommendedName>
        <fullName evidence="1">D-ribose pyranase</fullName>
        <ecNumber evidence="1">5.4.99.62</ecNumber>
    </recommendedName>
</protein>
<reference key="1">
    <citation type="submission" date="2009-03" db="EMBL/GenBank/DDBJ databases">
        <title>Complete genome sequence of Edwardsiella ictaluri 93-146.</title>
        <authorList>
            <person name="Williams M.L."/>
            <person name="Gillaspy A.F."/>
            <person name="Dyer D.W."/>
            <person name="Thune R.L."/>
            <person name="Waldbieser G.C."/>
            <person name="Schuster S.C."/>
            <person name="Gipson J."/>
            <person name="Zaitshik J."/>
            <person name="Landry C."/>
            <person name="Lawrence M.L."/>
        </authorList>
    </citation>
    <scope>NUCLEOTIDE SEQUENCE [LARGE SCALE GENOMIC DNA]</scope>
    <source>
        <strain>93-146</strain>
    </source>
</reference>
<sequence>MKKGTVLNSELSALISRLGHTDSVTVGDAGLPVPDGIQRIDLALTHGIPRFMQVIETMTAEMQVERAVLAQEMVEANPDIHRQLVTWLQRLAQTQGNAIHIDYVSHGQFKALSGESKAIVRSGECSPYANVLLYAGVTF</sequence>
<gene>
    <name evidence="1" type="primary">rbsD</name>
    <name type="ordered locus">NT01EI_3896</name>
</gene>
<proteinExistence type="inferred from homology"/>
<accession>C5BDG5</accession>
<dbReference type="EC" id="5.4.99.62" evidence="1"/>
<dbReference type="EMBL" id="CP001600">
    <property type="protein sequence ID" value="ACR71007.1"/>
    <property type="molecule type" value="Genomic_DNA"/>
</dbReference>
<dbReference type="RefSeq" id="WP_015873037.1">
    <property type="nucleotide sequence ID" value="NZ_CP169062.1"/>
</dbReference>
<dbReference type="SMR" id="C5BDG5"/>
<dbReference type="STRING" id="67780.B6E78_11005"/>
<dbReference type="GeneID" id="69540712"/>
<dbReference type="KEGG" id="eic:NT01EI_3896"/>
<dbReference type="HOGENOM" id="CLU_135498_0_0_6"/>
<dbReference type="OrthoDB" id="9805009at2"/>
<dbReference type="UniPathway" id="UPA00916">
    <property type="reaction ID" value="UER00888"/>
</dbReference>
<dbReference type="Proteomes" id="UP000001485">
    <property type="component" value="Chromosome"/>
</dbReference>
<dbReference type="GO" id="GO:0005829">
    <property type="term" value="C:cytosol"/>
    <property type="evidence" value="ECO:0007669"/>
    <property type="project" value="TreeGrafter"/>
</dbReference>
<dbReference type="GO" id="GO:0062193">
    <property type="term" value="F:D-ribose pyranase activity"/>
    <property type="evidence" value="ECO:0007669"/>
    <property type="project" value="UniProtKB-EC"/>
</dbReference>
<dbReference type="GO" id="GO:0016872">
    <property type="term" value="F:intramolecular lyase activity"/>
    <property type="evidence" value="ECO:0007669"/>
    <property type="project" value="UniProtKB-UniRule"/>
</dbReference>
<dbReference type="GO" id="GO:0048029">
    <property type="term" value="F:monosaccharide binding"/>
    <property type="evidence" value="ECO:0007669"/>
    <property type="project" value="InterPro"/>
</dbReference>
<dbReference type="GO" id="GO:0019303">
    <property type="term" value="P:D-ribose catabolic process"/>
    <property type="evidence" value="ECO:0007669"/>
    <property type="project" value="UniProtKB-UniRule"/>
</dbReference>
<dbReference type="Gene3D" id="3.40.1650.10">
    <property type="entry name" value="RbsD-like domain"/>
    <property type="match status" value="1"/>
</dbReference>
<dbReference type="HAMAP" id="MF_01661">
    <property type="entry name" value="D_rib_pyranase"/>
    <property type="match status" value="1"/>
</dbReference>
<dbReference type="InterPro" id="IPR023064">
    <property type="entry name" value="D-ribose_pyranase"/>
</dbReference>
<dbReference type="InterPro" id="IPR023750">
    <property type="entry name" value="RbsD-like_sf"/>
</dbReference>
<dbReference type="InterPro" id="IPR007721">
    <property type="entry name" value="RbsD_FucU"/>
</dbReference>
<dbReference type="NCBIfam" id="NF008761">
    <property type="entry name" value="PRK11797.1"/>
    <property type="match status" value="1"/>
</dbReference>
<dbReference type="PANTHER" id="PTHR37831">
    <property type="entry name" value="D-RIBOSE PYRANASE"/>
    <property type="match status" value="1"/>
</dbReference>
<dbReference type="PANTHER" id="PTHR37831:SF1">
    <property type="entry name" value="D-RIBOSE PYRANASE"/>
    <property type="match status" value="1"/>
</dbReference>
<dbReference type="Pfam" id="PF05025">
    <property type="entry name" value="RbsD_FucU"/>
    <property type="match status" value="1"/>
</dbReference>
<dbReference type="SUPFAM" id="SSF102546">
    <property type="entry name" value="RbsD-like"/>
    <property type="match status" value="1"/>
</dbReference>
<comment type="function">
    <text evidence="1">Catalyzes the interconversion of beta-pyran and beta-furan forms of D-ribose.</text>
</comment>
<comment type="catalytic activity">
    <reaction evidence="1">
        <text>beta-D-ribopyranose = beta-D-ribofuranose</text>
        <dbReference type="Rhea" id="RHEA:25432"/>
        <dbReference type="ChEBI" id="CHEBI:27476"/>
        <dbReference type="ChEBI" id="CHEBI:47002"/>
        <dbReference type="EC" id="5.4.99.62"/>
    </reaction>
</comment>
<comment type="pathway">
    <text evidence="1">Carbohydrate metabolism; D-ribose degradation; D-ribose 5-phosphate from beta-D-ribopyranose: step 1/2.</text>
</comment>
<comment type="subunit">
    <text evidence="1">Homodecamer.</text>
</comment>
<comment type="subcellular location">
    <subcellularLocation>
        <location evidence="1">Cytoplasm</location>
    </subcellularLocation>
</comment>
<comment type="similarity">
    <text evidence="1">Belongs to the RbsD / FucU family. RbsD subfamily.</text>
</comment>
<evidence type="ECO:0000255" key="1">
    <source>
        <dbReference type="HAMAP-Rule" id="MF_01661"/>
    </source>
</evidence>
<name>RBSD_EDWI9</name>
<feature type="chain" id="PRO_1000215865" description="D-ribose pyranase">
    <location>
        <begin position="1"/>
        <end position="139"/>
    </location>
</feature>
<feature type="active site" description="Proton donor" evidence="1">
    <location>
        <position position="20"/>
    </location>
</feature>
<feature type="binding site" evidence="1">
    <location>
        <position position="28"/>
    </location>
    <ligand>
        <name>substrate</name>
    </ligand>
</feature>
<feature type="binding site" evidence="1">
    <location>
        <position position="106"/>
    </location>
    <ligand>
        <name>substrate</name>
    </ligand>
</feature>
<feature type="binding site" evidence="1">
    <location>
        <begin position="128"/>
        <end position="130"/>
    </location>
    <ligand>
        <name>substrate</name>
    </ligand>
</feature>